<keyword id="KW-0002">3D-structure</keyword>
<keyword id="KW-1185">Reference proteome</keyword>
<keyword id="KW-0687">Ribonucleoprotein</keyword>
<keyword id="KW-0689">Ribosomal protein</keyword>
<keyword id="KW-0694">RNA-binding</keyword>
<keyword id="KW-0699">rRNA-binding</keyword>
<accession>Q9HVL6</accession>
<reference key="1">
    <citation type="journal article" date="2000" name="Nature">
        <title>Complete genome sequence of Pseudomonas aeruginosa PAO1, an opportunistic pathogen.</title>
        <authorList>
            <person name="Stover C.K."/>
            <person name="Pham X.-Q.T."/>
            <person name="Erwin A.L."/>
            <person name="Mizoguchi S.D."/>
            <person name="Warrener P."/>
            <person name="Hickey M.J."/>
            <person name="Brinkman F.S.L."/>
            <person name="Hufnagle W.O."/>
            <person name="Kowalik D.J."/>
            <person name="Lagrou M."/>
            <person name="Garber R.L."/>
            <person name="Goltry L."/>
            <person name="Tolentino E."/>
            <person name="Westbrock-Wadman S."/>
            <person name="Yuan Y."/>
            <person name="Brody L.L."/>
            <person name="Coulter S.N."/>
            <person name="Folger K.R."/>
            <person name="Kas A."/>
            <person name="Larbig K."/>
            <person name="Lim R.M."/>
            <person name="Smith K.A."/>
            <person name="Spencer D.H."/>
            <person name="Wong G.K.-S."/>
            <person name="Wu Z."/>
            <person name="Paulsen I.T."/>
            <person name="Reizer J."/>
            <person name="Saier M.H. Jr."/>
            <person name="Hancock R.E.W."/>
            <person name="Lory S."/>
            <person name="Olson M.V."/>
        </authorList>
    </citation>
    <scope>NUCLEOTIDE SEQUENCE [LARGE SCALE GENOMIC DNA]</scope>
    <source>
        <strain>ATCC 15692 / DSM 22644 / CIP 104116 / JCM 14847 / LMG 12228 / 1C / PRS 101 / PAO1</strain>
    </source>
</reference>
<proteinExistence type="evidence at protein level"/>
<protein>
    <recommendedName>
        <fullName evidence="1">Large ribosomal subunit protein bL21</fullName>
    </recommendedName>
    <alternativeName>
        <fullName evidence="2">50S ribosomal protein L21</fullName>
    </alternativeName>
</protein>
<organism>
    <name type="scientific">Pseudomonas aeruginosa (strain ATCC 15692 / DSM 22644 / CIP 104116 / JCM 14847 / LMG 12228 / 1C / PRS 101 / PAO1)</name>
    <dbReference type="NCBI Taxonomy" id="208964"/>
    <lineage>
        <taxon>Bacteria</taxon>
        <taxon>Pseudomonadati</taxon>
        <taxon>Pseudomonadota</taxon>
        <taxon>Gammaproteobacteria</taxon>
        <taxon>Pseudomonadales</taxon>
        <taxon>Pseudomonadaceae</taxon>
        <taxon>Pseudomonas</taxon>
    </lineage>
</organism>
<dbReference type="EMBL" id="AE004091">
    <property type="protein sequence ID" value="AAG07956.1"/>
    <property type="molecule type" value="Genomic_DNA"/>
</dbReference>
<dbReference type="PIR" id="B83075">
    <property type="entry name" value="B83075"/>
</dbReference>
<dbReference type="RefSeq" id="NP_253258.1">
    <property type="nucleotide sequence ID" value="NC_002516.2"/>
</dbReference>
<dbReference type="RefSeq" id="WP_003094761.1">
    <property type="nucleotide sequence ID" value="NZ_QZGE01000004.1"/>
</dbReference>
<dbReference type="PDB" id="7UNR">
    <property type="method" value="EM"/>
    <property type="resolution" value="2.90 A"/>
    <property type="chains" value="T=1-103"/>
</dbReference>
<dbReference type="PDB" id="7UNU">
    <property type="method" value="EM"/>
    <property type="resolution" value="2.90 A"/>
    <property type="chains" value="T=1-103"/>
</dbReference>
<dbReference type="PDB" id="7UNV">
    <property type="method" value="EM"/>
    <property type="resolution" value="2.70 A"/>
    <property type="chains" value="T=1-103"/>
</dbReference>
<dbReference type="PDB" id="7UNW">
    <property type="method" value="EM"/>
    <property type="resolution" value="2.60 A"/>
    <property type="chains" value="T=1-103"/>
</dbReference>
<dbReference type="PDB" id="8CD1">
    <property type="method" value="EM"/>
    <property type="resolution" value="3.00 A"/>
    <property type="chains" value="R=1-103"/>
</dbReference>
<dbReference type="PDB" id="8RWG">
    <property type="method" value="EM"/>
    <property type="resolution" value="2.46 A"/>
    <property type="chains" value="R=1-103"/>
</dbReference>
<dbReference type="PDBsum" id="7UNR"/>
<dbReference type="PDBsum" id="7UNU"/>
<dbReference type="PDBsum" id="7UNV"/>
<dbReference type="PDBsum" id="7UNW"/>
<dbReference type="PDBsum" id="8CD1"/>
<dbReference type="PDBsum" id="8RWG"/>
<dbReference type="EMDB" id="EMD-16566"/>
<dbReference type="EMDB" id="EMD-19547"/>
<dbReference type="EMDB" id="EMD-26630"/>
<dbReference type="EMDB" id="EMD-26633"/>
<dbReference type="EMDB" id="EMD-26634"/>
<dbReference type="EMDB" id="EMD-26635"/>
<dbReference type="SMR" id="Q9HVL6"/>
<dbReference type="FunCoup" id="Q9HVL6">
    <property type="interactions" value="804"/>
</dbReference>
<dbReference type="STRING" id="208964.PA4568"/>
<dbReference type="PaxDb" id="208964-PA4568"/>
<dbReference type="DNASU" id="881148"/>
<dbReference type="GeneID" id="881148"/>
<dbReference type="KEGG" id="pae:PA4568"/>
<dbReference type="PATRIC" id="fig|208964.12.peg.4780"/>
<dbReference type="PseudoCAP" id="PA4568"/>
<dbReference type="HOGENOM" id="CLU_061463_3_2_6"/>
<dbReference type="InParanoid" id="Q9HVL6"/>
<dbReference type="OrthoDB" id="9813334at2"/>
<dbReference type="PhylomeDB" id="Q9HVL6"/>
<dbReference type="BioCyc" id="PAER208964:G1FZ6-4661-MONOMER"/>
<dbReference type="PRO" id="PR:Q9HVL6"/>
<dbReference type="Proteomes" id="UP000002438">
    <property type="component" value="Chromosome"/>
</dbReference>
<dbReference type="GO" id="GO:0005737">
    <property type="term" value="C:cytoplasm"/>
    <property type="evidence" value="ECO:0007669"/>
    <property type="project" value="UniProtKB-ARBA"/>
</dbReference>
<dbReference type="GO" id="GO:1990904">
    <property type="term" value="C:ribonucleoprotein complex"/>
    <property type="evidence" value="ECO:0007669"/>
    <property type="project" value="UniProtKB-KW"/>
</dbReference>
<dbReference type="GO" id="GO:0005840">
    <property type="term" value="C:ribosome"/>
    <property type="evidence" value="ECO:0007669"/>
    <property type="project" value="UniProtKB-KW"/>
</dbReference>
<dbReference type="GO" id="GO:0019843">
    <property type="term" value="F:rRNA binding"/>
    <property type="evidence" value="ECO:0007669"/>
    <property type="project" value="UniProtKB-UniRule"/>
</dbReference>
<dbReference type="GO" id="GO:0003735">
    <property type="term" value="F:structural constituent of ribosome"/>
    <property type="evidence" value="ECO:0000318"/>
    <property type="project" value="GO_Central"/>
</dbReference>
<dbReference type="GO" id="GO:0006412">
    <property type="term" value="P:translation"/>
    <property type="evidence" value="ECO:0007669"/>
    <property type="project" value="UniProtKB-UniRule"/>
</dbReference>
<dbReference type="HAMAP" id="MF_01363">
    <property type="entry name" value="Ribosomal_bL21"/>
    <property type="match status" value="1"/>
</dbReference>
<dbReference type="InterPro" id="IPR028909">
    <property type="entry name" value="bL21-like"/>
</dbReference>
<dbReference type="InterPro" id="IPR036164">
    <property type="entry name" value="bL21-like_sf"/>
</dbReference>
<dbReference type="InterPro" id="IPR001787">
    <property type="entry name" value="Ribosomal_bL21"/>
</dbReference>
<dbReference type="InterPro" id="IPR018258">
    <property type="entry name" value="Ribosomal_bL21_CS"/>
</dbReference>
<dbReference type="NCBIfam" id="TIGR00061">
    <property type="entry name" value="L21"/>
    <property type="match status" value="1"/>
</dbReference>
<dbReference type="PANTHER" id="PTHR21349">
    <property type="entry name" value="50S RIBOSOMAL PROTEIN L21"/>
    <property type="match status" value="1"/>
</dbReference>
<dbReference type="PANTHER" id="PTHR21349:SF0">
    <property type="entry name" value="LARGE RIBOSOMAL SUBUNIT PROTEIN BL21M"/>
    <property type="match status" value="1"/>
</dbReference>
<dbReference type="Pfam" id="PF00829">
    <property type="entry name" value="Ribosomal_L21p"/>
    <property type="match status" value="1"/>
</dbReference>
<dbReference type="SUPFAM" id="SSF141091">
    <property type="entry name" value="L21p-like"/>
    <property type="match status" value="1"/>
</dbReference>
<dbReference type="PROSITE" id="PS01169">
    <property type="entry name" value="RIBOSOMAL_L21"/>
    <property type="match status" value="1"/>
</dbReference>
<comment type="function">
    <text evidence="1">This protein binds to 23S rRNA in the presence of protein L20.</text>
</comment>
<comment type="subunit">
    <text evidence="1">Part of the 50S ribosomal subunit. Contacts protein L20.</text>
</comment>
<comment type="similarity">
    <text evidence="1">Belongs to the bacterial ribosomal protein bL21 family.</text>
</comment>
<name>RL21_PSEAE</name>
<evidence type="ECO:0000255" key="1">
    <source>
        <dbReference type="HAMAP-Rule" id="MF_01363"/>
    </source>
</evidence>
<evidence type="ECO:0000305" key="2"/>
<feature type="chain" id="PRO_0000269365" description="Large ribosomal subunit protein bL21">
    <location>
        <begin position="1"/>
        <end position="103"/>
    </location>
</feature>
<sequence length="103" mass="11654">MYAVIVTGGKQHKVTEGEFLKVEKLDVATGEAIDFDRVLLVANGEDVKIGLPVVEGAKVTAEVVSHGRHDKVRIIKFRRRKHHMKRQGHRQWFTEIKITGIQA</sequence>
<gene>
    <name evidence="1" type="primary">rplU</name>
    <name type="ordered locus">PA4568</name>
</gene>